<feature type="chain" id="PRO_0000164320" description="Protein NrdI">
    <location>
        <begin position="1"/>
        <end position="151"/>
    </location>
</feature>
<feature type="sequence conflict" description="In Ref. 1; AAD45274." evidence="2" ref="1">
    <original>L</original>
    <variation>P</variation>
    <location>
        <position position="48"/>
    </location>
</feature>
<evidence type="ECO:0000250" key="1"/>
<evidence type="ECO:0000305" key="2"/>
<reference key="1">
    <citation type="submission" date="1999-05" db="EMBL/GenBank/DDBJ databases">
        <authorList>
            <person name="Skamrov A.V."/>
            <person name="Gol'dman M.A."/>
            <person name="Feoktistova E.S."/>
            <person name="Bibilashvili R.S."/>
        </authorList>
    </citation>
    <scope>NUCLEOTIDE SEQUENCE [GENOMIC DNA]</scope>
    <source>
        <strain>A5969Var.B</strain>
    </source>
</reference>
<reference key="2">
    <citation type="journal article" date="2003" name="Microbiology">
        <title>The complete genome sequence of the avian pathogen Mycoplasma gallisepticum strain R(low).</title>
        <authorList>
            <person name="Papazisi L."/>
            <person name="Gorton T.S."/>
            <person name="Kutish G."/>
            <person name="Markham P.F."/>
            <person name="Browning G.F."/>
            <person name="Nguyen D.K."/>
            <person name="Swartzell S."/>
            <person name="Madan A."/>
            <person name="Mahairas G."/>
            <person name="Geary S.J."/>
        </authorList>
    </citation>
    <scope>NUCLEOTIDE SEQUENCE [LARGE SCALE GENOMIC DNA]</scope>
    <source>
        <strain>R(low / passage 15 / clone 2)</strain>
    </source>
</reference>
<keyword id="KW-1185">Reference proteome</keyword>
<name>NRDI_MYCGA</name>
<accession>Q9XC21</accession>
<organism>
    <name type="scientific">Mycoplasmoides gallisepticum (strain R(low / passage 15 / clone 2))</name>
    <name type="common">Mycoplasma gallisepticum</name>
    <dbReference type="NCBI Taxonomy" id="710127"/>
    <lineage>
        <taxon>Bacteria</taxon>
        <taxon>Bacillati</taxon>
        <taxon>Mycoplasmatota</taxon>
        <taxon>Mycoplasmoidales</taxon>
        <taxon>Mycoplasmoidaceae</taxon>
        <taxon>Mycoplasmoides</taxon>
    </lineage>
</organism>
<sequence length="151" mass="17260">MENTPKLNVPKRKPTGEMRVVYFSSTTENTKKFCDKLGLPATRIPIKLSEEIEVDYDYVLICPTYAGGLDDFKGSVPRQVIKFLNKVQNREHCVGVVASGNTNFGETFGLAGHVLRAKLHVPLLHVFELIGTKYDEELVRERIHKLWNWEE</sequence>
<comment type="function">
    <text evidence="1">Probably involved in ribonucleotide reductase function.</text>
</comment>
<comment type="similarity">
    <text evidence="2">Belongs to the NrdI family.</text>
</comment>
<gene>
    <name type="primary">nrdI</name>
    <name type="ordered locus">MYCGA0440</name>
    <name type="ORF">MGA_0696</name>
</gene>
<dbReference type="EMBL" id="AF152114">
    <property type="protein sequence ID" value="AAD45274.1"/>
    <property type="molecule type" value="Genomic_DNA"/>
</dbReference>
<dbReference type="EMBL" id="AE015450">
    <property type="protein sequence ID" value="AAP56394.2"/>
    <property type="molecule type" value="Genomic_DNA"/>
</dbReference>
<dbReference type="RefSeq" id="WP_011113273.1">
    <property type="nucleotide sequence ID" value="NC_004829.2"/>
</dbReference>
<dbReference type="SMR" id="Q9XC21"/>
<dbReference type="GeneID" id="93509864"/>
<dbReference type="KEGG" id="mga:MGA_0696"/>
<dbReference type="PATRIC" id="fig|233150.7.peg.47"/>
<dbReference type="HOGENOM" id="CLU_114845_0_0_14"/>
<dbReference type="OrthoDB" id="350535at2"/>
<dbReference type="Proteomes" id="UP000001418">
    <property type="component" value="Chromosome"/>
</dbReference>
<dbReference type="GO" id="GO:0010181">
    <property type="term" value="F:FMN binding"/>
    <property type="evidence" value="ECO:0007669"/>
    <property type="project" value="InterPro"/>
</dbReference>
<dbReference type="GO" id="GO:0036211">
    <property type="term" value="P:protein modification process"/>
    <property type="evidence" value="ECO:0007669"/>
    <property type="project" value="InterPro"/>
</dbReference>
<dbReference type="Gene3D" id="3.40.50.360">
    <property type="match status" value="1"/>
</dbReference>
<dbReference type="HAMAP" id="MF_00128">
    <property type="entry name" value="NrdI"/>
    <property type="match status" value="1"/>
</dbReference>
<dbReference type="InterPro" id="IPR029039">
    <property type="entry name" value="Flavoprotein-like_sf"/>
</dbReference>
<dbReference type="InterPro" id="IPR020852">
    <property type="entry name" value="RNR_Ib_NrdI_bac"/>
</dbReference>
<dbReference type="InterPro" id="IPR004465">
    <property type="entry name" value="RNR_NrdI"/>
</dbReference>
<dbReference type="NCBIfam" id="TIGR00333">
    <property type="entry name" value="nrdI"/>
    <property type="match status" value="1"/>
</dbReference>
<dbReference type="PANTHER" id="PTHR37297">
    <property type="entry name" value="PROTEIN NRDI"/>
    <property type="match status" value="1"/>
</dbReference>
<dbReference type="PANTHER" id="PTHR37297:SF1">
    <property type="entry name" value="PROTEIN NRDI"/>
    <property type="match status" value="1"/>
</dbReference>
<dbReference type="Pfam" id="PF07972">
    <property type="entry name" value="Flavodoxin_NdrI"/>
    <property type="match status" value="1"/>
</dbReference>
<dbReference type="PIRSF" id="PIRSF005087">
    <property type="entry name" value="NrdI"/>
    <property type="match status" value="1"/>
</dbReference>
<dbReference type="SUPFAM" id="SSF52218">
    <property type="entry name" value="Flavoproteins"/>
    <property type="match status" value="1"/>
</dbReference>
<proteinExistence type="inferred from homology"/>
<protein>
    <recommendedName>
        <fullName>Protein NrdI</fullName>
    </recommendedName>
</protein>